<dbReference type="EC" id="1.18.1.2" evidence="1"/>
<dbReference type="EMBL" id="CP000270">
    <property type="protein sequence ID" value="ABE30942.1"/>
    <property type="molecule type" value="Genomic_DNA"/>
</dbReference>
<dbReference type="RefSeq" id="WP_011488552.1">
    <property type="nucleotide sequence ID" value="NC_007951.1"/>
</dbReference>
<dbReference type="SMR" id="Q13Y97"/>
<dbReference type="STRING" id="266265.Bxe_A2024"/>
<dbReference type="KEGG" id="bxb:DR64_4181"/>
<dbReference type="KEGG" id="bxe:Bxe_A2024"/>
<dbReference type="PATRIC" id="fig|266265.5.peg.2520"/>
<dbReference type="eggNOG" id="COG0492">
    <property type="taxonomic scope" value="Bacteria"/>
</dbReference>
<dbReference type="OrthoDB" id="9806179at2"/>
<dbReference type="Proteomes" id="UP000001817">
    <property type="component" value="Chromosome 1"/>
</dbReference>
<dbReference type="GO" id="GO:0004324">
    <property type="term" value="F:ferredoxin-NADP+ reductase activity"/>
    <property type="evidence" value="ECO:0007669"/>
    <property type="project" value="UniProtKB-UniRule"/>
</dbReference>
<dbReference type="GO" id="GO:0050660">
    <property type="term" value="F:flavin adenine dinucleotide binding"/>
    <property type="evidence" value="ECO:0007669"/>
    <property type="project" value="UniProtKB-UniRule"/>
</dbReference>
<dbReference type="GO" id="GO:0050661">
    <property type="term" value="F:NADP binding"/>
    <property type="evidence" value="ECO:0007669"/>
    <property type="project" value="UniProtKB-UniRule"/>
</dbReference>
<dbReference type="Gene3D" id="3.50.50.60">
    <property type="entry name" value="FAD/NAD(P)-binding domain"/>
    <property type="match status" value="2"/>
</dbReference>
<dbReference type="HAMAP" id="MF_01685">
    <property type="entry name" value="FENR2"/>
    <property type="match status" value="1"/>
</dbReference>
<dbReference type="InterPro" id="IPR036188">
    <property type="entry name" value="FAD/NAD-bd_sf"/>
</dbReference>
<dbReference type="InterPro" id="IPR023753">
    <property type="entry name" value="FAD/NAD-binding_dom"/>
</dbReference>
<dbReference type="InterPro" id="IPR022890">
    <property type="entry name" value="Fd--NADP_Rdtase_type_2"/>
</dbReference>
<dbReference type="InterPro" id="IPR050097">
    <property type="entry name" value="Ferredoxin-NADP_redctase_2"/>
</dbReference>
<dbReference type="PANTHER" id="PTHR48105">
    <property type="entry name" value="THIOREDOXIN REDUCTASE 1-RELATED-RELATED"/>
    <property type="match status" value="1"/>
</dbReference>
<dbReference type="Pfam" id="PF07992">
    <property type="entry name" value="Pyr_redox_2"/>
    <property type="match status" value="1"/>
</dbReference>
<dbReference type="PRINTS" id="PR00368">
    <property type="entry name" value="FADPNR"/>
</dbReference>
<dbReference type="PRINTS" id="PR00469">
    <property type="entry name" value="PNDRDTASEII"/>
</dbReference>
<dbReference type="SUPFAM" id="SSF51905">
    <property type="entry name" value="FAD/NAD(P)-binding domain"/>
    <property type="match status" value="1"/>
</dbReference>
<gene>
    <name type="ordered locus">Bxeno_A2404</name>
    <name type="ORF">Bxe_A2024</name>
</gene>
<organism>
    <name type="scientific">Paraburkholderia xenovorans (strain LB400)</name>
    <dbReference type="NCBI Taxonomy" id="266265"/>
    <lineage>
        <taxon>Bacteria</taxon>
        <taxon>Pseudomonadati</taxon>
        <taxon>Pseudomonadota</taxon>
        <taxon>Betaproteobacteria</taxon>
        <taxon>Burkholderiales</taxon>
        <taxon>Burkholderiaceae</taxon>
        <taxon>Paraburkholderia</taxon>
    </lineage>
</organism>
<protein>
    <recommendedName>
        <fullName evidence="1">Ferredoxin--NADP reductase</fullName>
        <shortName evidence="1">FNR</shortName>
        <shortName evidence="1">Fd-NADP(+) reductase</shortName>
        <ecNumber evidence="1">1.18.1.2</ecNumber>
    </recommendedName>
</protein>
<accession>Q13Y97</accession>
<name>FENR_PARXL</name>
<comment type="catalytic activity">
    <reaction evidence="1">
        <text>2 reduced [2Fe-2S]-[ferredoxin] + NADP(+) + H(+) = 2 oxidized [2Fe-2S]-[ferredoxin] + NADPH</text>
        <dbReference type="Rhea" id="RHEA:20125"/>
        <dbReference type="Rhea" id="RHEA-COMP:10000"/>
        <dbReference type="Rhea" id="RHEA-COMP:10001"/>
        <dbReference type="ChEBI" id="CHEBI:15378"/>
        <dbReference type="ChEBI" id="CHEBI:33737"/>
        <dbReference type="ChEBI" id="CHEBI:33738"/>
        <dbReference type="ChEBI" id="CHEBI:57783"/>
        <dbReference type="ChEBI" id="CHEBI:58349"/>
        <dbReference type="EC" id="1.18.1.2"/>
    </reaction>
</comment>
<comment type="cofactor">
    <cofactor evidence="1">
        <name>FAD</name>
        <dbReference type="ChEBI" id="CHEBI:57692"/>
    </cofactor>
    <text evidence="1">Binds 1 FAD per subunit.</text>
</comment>
<comment type="subunit">
    <text evidence="1">Homodimer.</text>
</comment>
<comment type="similarity">
    <text evidence="1">Belongs to the ferredoxin--NADP reductase type 2 family.</text>
</comment>
<keyword id="KW-0274">FAD</keyword>
<keyword id="KW-0285">Flavoprotein</keyword>
<keyword id="KW-0521">NADP</keyword>
<keyword id="KW-0560">Oxidoreductase</keyword>
<keyword id="KW-1185">Reference proteome</keyword>
<proteinExistence type="inferred from homology"/>
<sequence>MSSAANLPSPSPSPPIRTDVLIVGAGPVGLFAAFEAGVIGLSCQIVDGLDKVGGQCIELYPDKPIYDIPAIPSCTARELVERLLAQCRPFDPPIHLEQRVESVEQGGDGRWTVRTDRGLVFDVAAILLAAGNGAFVPQKLALAEAVPLESRHVHYSVPRLADFAGKTVVVAGGGDSALDWALALRKVARRVTLVHRRSGFSAADSSVESMRRAVEAGEMDFVVGAIAGLDVEDDALKSITLRHIEGETQLAAEHLVALYGLVADLGPIAQWGLSIHGGRVDVDTSNYESSRPGIFAVGDIAHYPNKQKLILSGFHEASLALRKAYSYAYPEKKRVHVHSSYDAKLAEKVSAAG</sequence>
<evidence type="ECO:0000255" key="1">
    <source>
        <dbReference type="HAMAP-Rule" id="MF_01685"/>
    </source>
</evidence>
<feature type="chain" id="PRO_0000364815" description="Ferredoxin--NADP reductase">
    <location>
        <begin position="1"/>
        <end position="353"/>
    </location>
</feature>
<feature type="binding site" evidence="1">
    <location>
        <position position="47"/>
    </location>
    <ligand>
        <name>FAD</name>
        <dbReference type="ChEBI" id="CHEBI:57692"/>
    </ligand>
</feature>
<feature type="binding site" evidence="1">
    <location>
        <position position="55"/>
    </location>
    <ligand>
        <name>FAD</name>
        <dbReference type="ChEBI" id="CHEBI:57692"/>
    </ligand>
</feature>
<feature type="binding site" evidence="1">
    <location>
        <position position="60"/>
    </location>
    <ligand>
        <name>FAD</name>
        <dbReference type="ChEBI" id="CHEBI:57692"/>
    </ligand>
</feature>
<feature type="binding site" evidence="1">
    <location>
        <position position="100"/>
    </location>
    <ligand>
        <name>FAD</name>
        <dbReference type="ChEBI" id="CHEBI:57692"/>
    </ligand>
</feature>
<feature type="binding site" evidence="1">
    <location>
        <position position="135"/>
    </location>
    <ligand>
        <name>FAD</name>
        <dbReference type="ChEBI" id="CHEBI:57692"/>
    </ligand>
</feature>
<feature type="binding site" evidence="1">
    <location>
        <position position="299"/>
    </location>
    <ligand>
        <name>FAD</name>
        <dbReference type="ChEBI" id="CHEBI:57692"/>
    </ligand>
</feature>
<feature type="binding site" evidence="1">
    <location>
        <position position="340"/>
    </location>
    <ligand>
        <name>FAD</name>
        <dbReference type="ChEBI" id="CHEBI:57692"/>
    </ligand>
</feature>
<reference key="1">
    <citation type="journal article" date="2006" name="Proc. Natl. Acad. Sci. U.S.A.">
        <title>Burkholderia xenovorans LB400 harbors a multi-replicon, 9.73-Mbp genome shaped for versatility.</title>
        <authorList>
            <person name="Chain P.S.G."/>
            <person name="Denef V.J."/>
            <person name="Konstantinidis K.T."/>
            <person name="Vergez L.M."/>
            <person name="Agullo L."/>
            <person name="Reyes V.L."/>
            <person name="Hauser L."/>
            <person name="Cordova M."/>
            <person name="Gomez L."/>
            <person name="Gonzalez M."/>
            <person name="Land M."/>
            <person name="Lao V."/>
            <person name="Larimer F."/>
            <person name="LiPuma J.J."/>
            <person name="Mahenthiralingam E."/>
            <person name="Malfatti S.A."/>
            <person name="Marx C.J."/>
            <person name="Parnell J.J."/>
            <person name="Ramette A."/>
            <person name="Richardson P."/>
            <person name="Seeger M."/>
            <person name="Smith D."/>
            <person name="Spilker T."/>
            <person name="Sul W.J."/>
            <person name="Tsoi T.V."/>
            <person name="Ulrich L.E."/>
            <person name="Zhulin I.B."/>
            <person name="Tiedje J.M."/>
        </authorList>
    </citation>
    <scope>NUCLEOTIDE SEQUENCE [LARGE SCALE GENOMIC DNA]</scope>
    <source>
        <strain>LB400</strain>
    </source>
</reference>